<keyword id="KW-0963">Cytoplasm</keyword>
<keyword id="KW-0255">Endonuclease</keyword>
<keyword id="KW-0378">Hydrolase</keyword>
<keyword id="KW-0460">Magnesium</keyword>
<keyword id="KW-0479">Metal-binding</keyword>
<keyword id="KW-0540">Nuclease</keyword>
<sequence>MNQVVIYTDGACKGNPGPGGWGVVLRSGALEKELFGGELGTTNNRMELLAVIEALGALKRPCAVTLYLDSQYVRKGITEWIQGWKKKGWRTASGQPVKNVELWKRLDDLVAGGGHVIDWRWVKGHAGDPGNERADALANKGVDKALGRA</sequence>
<reference key="1">
    <citation type="submission" date="2006-12" db="EMBL/GenBank/DDBJ databases">
        <title>Complete sequence of Acidovorax avenae subsp. citrulli AAC00-1.</title>
        <authorList>
            <person name="Copeland A."/>
            <person name="Lucas S."/>
            <person name="Lapidus A."/>
            <person name="Barry K."/>
            <person name="Detter J.C."/>
            <person name="Glavina del Rio T."/>
            <person name="Dalin E."/>
            <person name="Tice H."/>
            <person name="Pitluck S."/>
            <person name="Kiss H."/>
            <person name="Brettin T."/>
            <person name="Bruce D."/>
            <person name="Han C."/>
            <person name="Tapia R."/>
            <person name="Gilna P."/>
            <person name="Schmutz J."/>
            <person name="Larimer F."/>
            <person name="Land M."/>
            <person name="Hauser L."/>
            <person name="Kyrpides N."/>
            <person name="Kim E."/>
            <person name="Stahl D."/>
            <person name="Richardson P."/>
        </authorList>
    </citation>
    <scope>NUCLEOTIDE SEQUENCE [LARGE SCALE GENOMIC DNA]</scope>
    <source>
        <strain>AAC00-1</strain>
    </source>
</reference>
<dbReference type="EC" id="3.1.26.4" evidence="1"/>
<dbReference type="EMBL" id="CP000512">
    <property type="protein sequence ID" value="ABM33225.1"/>
    <property type="molecule type" value="Genomic_DNA"/>
</dbReference>
<dbReference type="RefSeq" id="WP_011795749.1">
    <property type="nucleotide sequence ID" value="NC_008752.1"/>
</dbReference>
<dbReference type="SMR" id="A1TQI7"/>
<dbReference type="STRING" id="397945.Aave_2653"/>
<dbReference type="GeneID" id="79792252"/>
<dbReference type="KEGG" id="aav:Aave_2653"/>
<dbReference type="eggNOG" id="COG0328">
    <property type="taxonomic scope" value="Bacteria"/>
</dbReference>
<dbReference type="HOGENOM" id="CLU_030894_6_0_4"/>
<dbReference type="OrthoDB" id="7845843at2"/>
<dbReference type="Proteomes" id="UP000002596">
    <property type="component" value="Chromosome"/>
</dbReference>
<dbReference type="GO" id="GO:0005737">
    <property type="term" value="C:cytoplasm"/>
    <property type="evidence" value="ECO:0007669"/>
    <property type="project" value="UniProtKB-SubCell"/>
</dbReference>
<dbReference type="GO" id="GO:0000287">
    <property type="term" value="F:magnesium ion binding"/>
    <property type="evidence" value="ECO:0007669"/>
    <property type="project" value="UniProtKB-UniRule"/>
</dbReference>
<dbReference type="GO" id="GO:0003676">
    <property type="term" value="F:nucleic acid binding"/>
    <property type="evidence" value="ECO:0007669"/>
    <property type="project" value="InterPro"/>
</dbReference>
<dbReference type="GO" id="GO:0004523">
    <property type="term" value="F:RNA-DNA hybrid ribonuclease activity"/>
    <property type="evidence" value="ECO:0007669"/>
    <property type="project" value="UniProtKB-UniRule"/>
</dbReference>
<dbReference type="GO" id="GO:0043137">
    <property type="term" value="P:DNA replication, removal of RNA primer"/>
    <property type="evidence" value="ECO:0007669"/>
    <property type="project" value="TreeGrafter"/>
</dbReference>
<dbReference type="CDD" id="cd09278">
    <property type="entry name" value="RNase_HI_prokaryote_like"/>
    <property type="match status" value="1"/>
</dbReference>
<dbReference type="FunFam" id="3.30.420.10:FF:000089">
    <property type="entry name" value="Ribonuclease H"/>
    <property type="match status" value="1"/>
</dbReference>
<dbReference type="Gene3D" id="3.30.420.10">
    <property type="entry name" value="Ribonuclease H-like superfamily/Ribonuclease H"/>
    <property type="match status" value="1"/>
</dbReference>
<dbReference type="HAMAP" id="MF_00042">
    <property type="entry name" value="RNase_H"/>
    <property type="match status" value="1"/>
</dbReference>
<dbReference type="InterPro" id="IPR050092">
    <property type="entry name" value="RNase_H"/>
</dbReference>
<dbReference type="InterPro" id="IPR012337">
    <property type="entry name" value="RNaseH-like_sf"/>
</dbReference>
<dbReference type="InterPro" id="IPR002156">
    <property type="entry name" value="RNaseH_domain"/>
</dbReference>
<dbReference type="InterPro" id="IPR036397">
    <property type="entry name" value="RNaseH_sf"/>
</dbReference>
<dbReference type="InterPro" id="IPR022892">
    <property type="entry name" value="RNaseHI"/>
</dbReference>
<dbReference type="NCBIfam" id="NF001236">
    <property type="entry name" value="PRK00203.1"/>
    <property type="match status" value="1"/>
</dbReference>
<dbReference type="PANTHER" id="PTHR10642">
    <property type="entry name" value="RIBONUCLEASE H1"/>
    <property type="match status" value="1"/>
</dbReference>
<dbReference type="PANTHER" id="PTHR10642:SF26">
    <property type="entry name" value="RIBONUCLEASE H1"/>
    <property type="match status" value="1"/>
</dbReference>
<dbReference type="Pfam" id="PF00075">
    <property type="entry name" value="RNase_H"/>
    <property type="match status" value="1"/>
</dbReference>
<dbReference type="SUPFAM" id="SSF53098">
    <property type="entry name" value="Ribonuclease H-like"/>
    <property type="match status" value="1"/>
</dbReference>
<dbReference type="PROSITE" id="PS50879">
    <property type="entry name" value="RNASE_H_1"/>
    <property type="match status" value="1"/>
</dbReference>
<gene>
    <name evidence="1" type="primary">rnhA</name>
    <name type="ordered locus">Aave_2653</name>
</gene>
<proteinExistence type="inferred from homology"/>
<comment type="function">
    <text evidence="1">Endonuclease that specifically degrades the RNA of RNA-DNA hybrids.</text>
</comment>
<comment type="catalytic activity">
    <reaction evidence="1">
        <text>Endonucleolytic cleavage to 5'-phosphomonoester.</text>
        <dbReference type="EC" id="3.1.26.4"/>
    </reaction>
</comment>
<comment type="cofactor">
    <cofactor evidence="1">
        <name>Mg(2+)</name>
        <dbReference type="ChEBI" id="CHEBI:18420"/>
    </cofactor>
    <text evidence="1">Binds 1 Mg(2+) ion per subunit. May bind a second metal ion at a regulatory site, or after substrate binding.</text>
</comment>
<comment type="subunit">
    <text evidence="1">Monomer.</text>
</comment>
<comment type="subcellular location">
    <subcellularLocation>
        <location evidence="1">Cytoplasm</location>
    </subcellularLocation>
</comment>
<comment type="similarity">
    <text evidence="1">Belongs to the RNase H family.</text>
</comment>
<name>RNH_PARC0</name>
<evidence type="ECO:0000255" key="1">
    <source>
        <dbReference type="HAMAP-Rule" id="MF_00042"/>
    </source>
</evidence>
<evidence type="ECO:0000255" key="2">
    <source>
        <dbReference type="PROSITE-ProRule" id="PRU00408"/>
    </source>
</evidence>
<accession>A1TQI7</accession>
<feature type="chain" id="PRO_0000332552" description="Ribonuclease H">
    <location>
        <begin position="1"/>
        <end position="149"/>
    </location>
</feature>
<feature type="domain" description="RNase H type-1" evidence="2">
    <location>
        <begin position="1"/>
        <end position="143"/>
    </location>
</feature>
<feature type="binding site" evidence="1">
    <location>
        <position position="9"/>
    </location>
    <ligand>
        <name>Mg(2+)</name>
        <dbReference type="ChEBI" id="CHEBI:18420"/>
        <label>1</label>
    </ligand>
</feature>
<feature type="binding site" evidence="1">
    <location>
        <position position="9"/>
    </location>
    <ligand>
        <name>Mg(2+)</name>
        <dbReference type="ChEBI" id="CHEBI:18420"/>
        <label>2</label>
    </ligand>
</feature>
<feature type="binding site" evidence="1">
    <location>
        <position position="47"/>
    </location>
    <ligand>
        <name>Mg(2+)</name>
        <dbReference type="ChEBI" id="CHEBI:18420"/>
        <label>1</label>
    </ligand>
</feature>
<feature type="binding site" evidence="1">
    <location>
        <position position="69"/>
    </location>
    <ligand>
        <name>Mg(2+)</name>
        <dbReference type="ChEBI" id="CHEBI:18420"/>
        <label>1</label>
    </ligand>
</feature>
<feature type="binding site" evidence="1">
    <location>
        <position position="135"/>
    </location>
    <ligand>
        <name>Mg(2+)</name>
        <dbReference type="ChEBI" id="CHEBI:18420"/>
        <label>2</label>
    </ligand>
</feature>
<protein>
    <recommendedName>
        <fullName evidence="1">Ribonuclease H</fullName>
        <shortName evidence="1">RNase H</shortName>
        <ecNumber evidence="1">3.1.26.4</ecNumber>
    </recommendedName>
</protein>
<organism>
    <name type="scientific">Paracidovorax citrulli (strain AAC00-1)</name>
    <name type="common">Acidovorax citrulli</name>
    <dbReference type="NCBI Taxonomy" id="397945"/>
    <lineage>
        <taxon>Bacteria</taxon>
        <taxon>Pseudomonadati</taxon>
        <taxon>Pseudomonadota</taxon>
        <taxon>Betaproteobacteria</taxon>
        <taxon>Burkholderiales</taxon>
        <taxon>Comamonadaceae</taxon>
        <taxon>Paracidovorax</taxon>
    </lineage>
</organism>